<feature type="chain" id="PRO_1000055169" description="ATP synthase subunit beta">
    <location>
        <begin position="1"/>
        <end position="468"/>
    </location>
</feature>
<feature type="binding site" evidence="1">
    <location>
        <begin position="155"/>
        <end position="162"/>
    </location>
    <ligand>
        <name>ATP</name>
        <dbReference type="ChEBI" id="CHEBI:30616"/>
    </ligand>
</feature>
<sequence length="468" mass="50904">MSSGKIAQVIGPVVDVLFAAGEKLPEINNALVVYKNDERKTKIVLEVALELGDGMVRTIAMESTDGLTRGMEVLDTGRPISVPVGKETLGRVFNVLGDTIDLEAPFTEDAERQPIHKKAPTFDELSTSSEILETGIKVIDLLAPYLKGGKVGLFGGAGVGKTVLIQELIHNIAQEHGGISVFAGVGERTREGNDLYWEMKESGVIEKTAMVFGQMNEPPGARMRVALTGLTIAEYFRDVEGQDVLLFIDNIFRFTQAGSEVSALLGRMPSAVGYQPTLATEMGQLQERITSTKKGSVTSIQAIYVPADDYTDPAPATAFAHLDSTTNLERKLVQLGIYPAVDPLASSSRALAPEIVGEEHYAVAAEVKRVLQRYHELQDIIAILGMDELSDEEKTLVARARRIQFFLSQNFNVAEQFTGQPGSYVPVAETVRGFKEILDGKYDHLPEDAFRGVGSIEDVIAKAEKMGF</sequence>
<name>ATPB_STRP2</name>
<proteinExistence type="inferred from homology"/>
<reference key="1">
    <citation type="journal article" date="2007" name="J. Bacteriol.">
        <title>Genome sequence of Avery's virulent serotype 2 strain D39 of Streptococcus pneumoniae and comparison with that of unencapsulated laboratory strain R6.</title>
        <authorList>
            <person name="Lanie J.A."/>
            <person name="Ng W.-L."/>
            <person name="Kazmierczak K.M."/>
            <person name="Andrzejewski T.M."/>
            <person name="Davidsen T.M."/>
            <person name="Wayne K.J."/>
            <person name="Tettelin H."/>
            <person name="Glass J.I."/>
            <person name="Winkler M.E."/>
        </authorList>
    </citation>
    <scope>NUCLEOTIDE SEQUENCE [LARGE SCALE GENOMIC DNA]</scope>
    <source>
        <strain>D39 / NCTC 7466</strain>
    </source>
</reference>
<gene>
    <name evidence="1" type="primary">atpD</name>
    <name type="ordered locus">SPD_1335</name>
</gene>
<comment type="function">
    <text evidence="1">Produces ATP from ADP in the presence of a proton gradient across the membrane. The catalytic sites are hosted primarily by the beta subunits.</text>
</comment>
<comment type="catalytic activity">
    <reaction evidence="1">
        <text>ATP + H2O + 4 H(+)(in) = ADP + phosphate + 5 H(+)(out)</text>
        <dbReference type="Rhea" id="RHEA:57720"/>
        <dbReference type="ChEBI" id="CHEBI:15377"/>
        <dbReference type="ChEBI" id="CHEBI:15378"/>
        <dbReference type="ChEBI" id="CHEBI:30616"/>
        <dbReference type="ChEBI" id="CHEBI:43474"/>
        <dbReference type="ChEBI" id="CHEBI:456216"/>
        <dbReference type="EC" id="7.1.2.2"/>
    </reaction>
</comment>
<comment type="subunit">
    <text evidence="1">F-type ATPases have 2 components, CF(1) - the catalytic core - and CF(0) - the membrane proton channel. CF(1) has five subunits: alpha(3), beta(3), gamma(1), delta(1), epsilon(1). CF(0) has three main subunits: a(1), b(2) and c(9-12). The alpha and beta chains form an alternating ring which encloses part of the gamma chain. CF(1) is attached to CF(0) by a central stalk formed by the gamma and epsilon chains, while a peripheral stalk is formed by the delta and b chains.</text>
</comment>
<comment type="subcellular location">
    <subcellularLocation>
        <location evidence="1">Cell membrane</location>
        <topology evidence="1">Peripheral membrane protein</topology>
    </subcellularLocation>
</comment>
<comment type="similarity">
    <text evidence="1">Belongs to the ATPase alpha/beta chains family.</text>
</comment>
<keyword id="KW-0066">ATP synthesis</keyword>
<keyword id="KW-0067">ATP-binding</keyword>
<keyword id="KW-1003">Cell membrane</keyword>
<keyword id="KW-0139">CF(1)</keyword>
<keyword id="KW-0375">Hydrogen ion transport</keyword>
<keyword id="KW-0406">Ion transport</keyword>
<keyword id="KW-0472">Membrane</keyword>
<keyword id="KW-0547">Nucleotide-binding</keyword>
<keyword id="KW-1185">Reference proteome</keyword>
<keyword id="KW-1278">Translocase</keyword>
<keyword id="KW-0813">Transport</keyword>
<protein>
    <recommendedName>
        <fullName evidence="1">ATP synthase subunit beta</fullName>
        <ecNumber evidence="1">7.1.2.2</ecNumber>
    </recommendedName>
    <alternativeName>
        <fullName evidence="1">ATP synthase F1 sector subunit beta</fullName>
    </alternativeName>
    <alternativeName>
        <fullName evidence="1">F-ATPase subunit beta</fullName>
    </alternativeName>
</protein>
<accession>Q04HT9</accession>
<organism>
    <name type="scientific">Streptococcus pneumoniae serotype 2 (strain D39 / NCTC 7466)</name>
    <dbReference type="NCBI Taxonomy" id="373153"/>
    <lineage>
        <taxon>Bacteria</taxon>
        <taxon>Bacillati</taxon>
        <taxon>Bacillota</taxon>
        <taxon>Bacilli</taxon>
        <taxon>Lactobacillales</taxon>
        <taxon>Streptococcaceae</taxon>
        <taxon>Streptococcus</taxon>
    </lineage>
</organism>
<evidence type="ECO:0000255" key="1">
    <source>
        <dbReference type="HAMAP-Rule" id="MF_01347"/>
    </source>
</evidence>
<dbReference type="EC" id="7.1.2.2" evidence="1"/>
<dbReference type="EMBL" id="CP000410">
    <property type="protein sequence ID" value="ABJ54840.1"/>
    <property type="molecule type" value="Genomic_DNA"/>
</dbReference>
<dbReference type="RefSeq" id="WP_000094354.1">
    <property type="nucleotide sequence ID" value="NZ_JAMLJR010000008.1"/>
</dbReference>
<dbReference type="SMR" id="Q04HT9"/>
<dbReference type="PaxDb" id="373153-SPD_1335"/>
<dbReference type="KEGG" id="spd:SPD_1335"/>
<dbReference type="eggNOG" id="COG0055">
    <property type="taxonomic scope" value="Bacteria"/>
</dbReference>
<dbReference type="HOGENOM" id="CLU_022398_0_2_9"/>
<dbReference type="BioCyc" id="SPNE373153:G1G6V-1440-MONOMER"/>
<dbReference type="Proteomes" id="UP000001452">
    <property type="component" value="Chromosome"/>
</dbReference>
<dbReference type="GO" id="GO:0005886">
    <property type="term" value="C:plasma membrane"/>
    <property type="evidence" value="ECO:0007669"/>
    <property type="project" value="UniProtKB-SubCell"/>
</dbReference>
<dbReference type="GO" id="GO:0045259">
    <property type="term" value="C:proton-transporting ATP synthase complex"/>
    <property type="evidence" value="ECO:0007669"/>
    <property type="project" value="UniProtKB-KW"/>
</dbReference>
<dbReference type="GO" id="GO:0005524">
    <property type="term" value="F:ATP binding"/>
    <property type="evidence" value="ECO:0007669"/>
    <property type="project" value="UniProtKB-UniRule"/>
</dbReference>
<dbReference type="GO" id="GO:0016887">
    <property type="term" value="F:ATP hydrolysis activity"/>
    <property type="evidence" value="ECO:0007669"/>
    <property type="project" value="InterPro"/>
</dbReference>
<dbReference type="GO" id="GO:0046933">
    <property type="term" value="F:proton-transporting ATP synthase activity, rotational mechanism"/>
    <property type="evidence" value="ECO:0007669"/>
    <property type="project" value="UniProtKB-UniRule"/>
</dbReference>
<dbReference type="CDD" id="cd18110">
    <property type="entry name" value="ATP-synt_F1_beta_C"/>
    <property type="match status" value="1"/>
</dbReference>
<dbReference type="CDD" id="cd18115">
    <property type="entry name" value="ATP-synt_F1_beta_N"/>
    <property type="match status" value="1"/>
</dbReference>
<dbReference type="CDD" id="cd01133">
    <property type="entry name" value="F1-ATPase_beta_CD"/>
    <property type="match status" value="1"/>
</dbReference>
<dbReference type="FunFam" id="1.10.1140.10:FF:000001">
    <property type="entry name" value="ATP synthase subunit beta"/>
    <property type="match status" value="1"/>
</dbReference>
<dbReference type="FunFam" id="2.40.10.170:FF:000005">
    <property type="entry name" value="ATP synthase subunit beta"/>
    <property type="match status" value="1"/>
</dbReference>
<dbReference type="FunFam" id="3.40.50.300:FF:000004">
    <property type="entry name" value="ATP synthase subunit beta"/>
    <property type="match status" value="1"/>
</dbReference>
<dbReference type="Gene3D" id="2.40.10.170">
    <property type="match status" value="1"/>
</dbReference>
<dbReference type="Gene3D" id="1.10.1140.10">
    <property type="entry name" value="Bovine Mitochondrial F1-atpase, Atp Synthase Beta Chain, Chain D, domain 3"/>
    <property type="match status" value="1"/>
</dbReference>
<dbReference type="Gene3D" id="3.40.50.300">
    <property type="entry name" value="P-loop containing nucleotide triphosphate hydrolases"/>
    <property type="match status" value="1"/>
</dbReference>
<dbReference type="HAMAP" id="MF_01347">
    <property type="entry name" value="ATP_synth_beta_bact"/>
    <property type="match status" value="1"/>
</dbReference>
<dbReference type="InterPro" id="IPR003593">
    <property type="entry name" value="AAA+_ATPase"/>
</dbReference>
<dbReference type="InterPro" id="IPR055190">
    <property type="entry name" value="ATP-synt_VA_C"/>
</dbReference>
<dbReference type="InterPro" id="IPR005722">
    <property type="entry name" value="ATP_synth_F1_bsu"/>
</dbReference>
<dbReference type="InterPro" id="IPR020003">
    <property type="entry name" value="ATPase_a/bsu_AS"/>
</dbReference>
<dbReference type="InterPro" id="IPR050053">
    <property type="entry name" value="ATPase_alpha/beta_chains"/>
</dbReference>
<dbReference type="InterPro" id="IPR004100">
    <property type="entry name" value="ATPase_F1/V1/A1_a/bsu_N"/>
</dbReference>
<dbReference type="InterPro" id="IPR036121">
    <property type="entry name" value="ATPase_F1/V1/A1_a/bsu_N_sf"/>
</dbReference>
<dbReference type="InterPro" id="IPR000194">
    <property type="entry name" value="ATPase_F1/V1/A1_a/bsu_nucl-bd"/>
</dbReference>
<dbReference type="InterPro" id="IPR024034">
    <property type="entry name" value="ATPase_F1/V1_b/a_C"/>
</dbReference>
<dbReference type="InterPro" id="IPR027417">
    <property type="entry name" value="P-loop_NTPase"/>
</dbReference>
<dbReference type="NCBIfam" id="TIGR01039">
    <property type="entry name" value="atpD"/>
    <property type="match status" value="1"/>
</dbReference>
<dbReference type="PANTHER" id="PTHR15184">
    <property type="entry name" value="ATP SYNTHASE"/>
    <property type="match status" value="1"/>
</dbReference>
<dbReference type="PANTHER" id="PTHR15184:SF71">
    <property type="entry name" value="ATP SYNTHASE SUBUNIT BETA, MITOCHONDRIAL"/>
    <property type="match status" value="1"/>
</dbReference>
<dbReference type="Pfam" id="PF00006">
    <property type="entry name" value="ATP-synt_ab"/>
    <property type="match status" value="1"/>
</dbReference>
<dbReference type="Pfam" id="PF02874">
    <property type="entry name" value="ATP-synt_ab_N"/>
    <property type="match status" value="1"/>
</dbReference>
<dbReference type="Pfam" id="PF22919">
    <property type="entry name" value="ATP-synt_VA_C"/>
    <property type="match status" value="1"/>
</dbReference>
<dbReference type="SMART" id="SM00382">
    <property type="entry name" value="AAA"/>
    <property type="match status" value="1"/>
</dbReference>
<dbReference type="SUPFAM" id="SSF47917">
    <property type="entry name" value="C-terminal domain of alpha and beta subunits of F1 ATP synthase"/>
    <property type="match status" value="1"/>
</dbReference>
<dbReference type="SUPFAM" id="SSF50615">
    <property type="entry name" value="N-terminal domain of alpha and beta subunits of F1 ATP synthase"/>
    <property type="match status" value="1"/>
</dbReference>
<dbReference type="SUPFAM" id="SSF52540">
    <property type="entry name" value="P-loop containing nucleoside triphosphate hydrolases"/>
    <property type="match status" value="1"/>
</dbReference>
<dbReference type="PROSITE" id="PS00152">
    <property type="entry name" value="ATPASE_ALPHA_BETA"/>
    <property type="match status" value="1"/>
</dbReference>